<sequence>MPSFDIVSEIKLEEVRNAVENANRELSTRFDFRGVEASFELKENIVTMSCDSDFQLKQMLDILRGTCVKRGVDTAAFEEKDVQHIGKIYKQAIAFKEGIEQPVAKKLIKMIKDAKIKVQASIQGDQVRVTGKKRDDLQQVMALAKSSDLEQPLQFTNFRD</sequence>
<gene>
    <name type="ordered locus">Patl_4311</name>
</gene>
<keyword id="KW-0547">Nucleotide-binding</keyword>
<protein>
    <recommendedName>
        <fullName evidence="1">Nucleotide-binding protein Patl_4311</fullName>
    </recommendedName>
</protein>
<proteinExistence type="inferred from homology"/>
<comment type="function">
    <text evidence="1">Nucleotide-binding protein.</text>
</comment>
<comment type="similarity">
    <text evidence="1">Belongs to the YajQ family.</text>
</comment>
<accession>Q15MS8</accession>
<organism>
    <name type="scientific">Pseudoalteromonas atlantica (strain T6c / ATCC BAA-1087)</name>
    <dbReference type="NCBI Taxonomy" id="3042615"/>
    <lineage>
        <taxon>Bacteria</taxon>
        <taxon>Pseudomonadati</taxon>
        <taxon>Pseudomonadota</taxon>
        <taxon>Gammaproteobacteria</taxon>
        <taxon>Alteromonadales</taxon>
        <taxon>Alteromonadaceae</taxon>
        <taxon>Paraglaciecola</taxon>
    </lineage>
</organism>
<reference key="1">
    <citation type="submission" date="2006-06" db="EMBL/GenBank/DDBJ databases">
        <title>Complete sequence of Pseudoalteromonas atlantica T6c.</title>
        <authorList>
            <consortium name="US DOE Joint Genome Institute"/>
            <person name="Copeland A."/>
            <person name="Lucas S."/>
            <person name="Lapidus A."/>
            <person name="Barry K."/>
            <person name="Detter J.C."/>
            <person name="Glavina del Rio T."/>
            <person name="Hammon N."/>
            <person name="Israni S."/>
            <person name="Dalin E."/>
            <person name="Tice H."/>
            <person name="Pitluck S."/>
            <person name="Saunders E."/>
            <person name="Brettin T."/>
            <person name="Bruce D."/>
            <person name="Han C."/>
            <person name="Tapia R."/>
            <person name="Gilna P."/>
            <person name="Schmutz J."/>
            <person name="Larimer F."/>
            <person name="Land M."/>
            <person name="Hauser L."/>
            <person name="Kyrpides N."/>
            <person name="Kim E."/>
            <person name="Karls A.C."/>
            <person name="Bartlett D."/>
            <person name="Higgins B.P."/>
            <person name="Richardson P."/>
        </authorList>
    </citation>
    <scope>NUCLEOTIDE SEQUENCE [LARGE SCALE GENOMIC DNA]</scope>
    <source>
        <strain>T6c / ATCC BAA-1087</strain>
    </source>
</reference>
<name>Y4311_PSEA6</name>
<dbReference type="EMBL" id="CP000388">
    <property type="protein sequence ID" value="ABG42810.1"/>
    <property type="molecule type" value="Genomic_DNA"/>
</dbReference>
<dbReference type="RefSeq" id="WP_011576989.1">
    <property type="nucleotide sequence ID" value="NC_008228.1"/>
</dbReference>
<dbReference type="SMR" id="Q15MS8"/>
<dbReference type="STRING" id="342610.Patl_4311"/>
<dbReference type="KEGG" id="pat:Patl_4311"/>
<dbReference type="eggNOG" id="COG1666">
    <property type="taxonomic scope" value="Bacteria"/>
</dbReference>
<dbReference type="HOGENOM" id="CLU_099839_1_0_6"/>
<dbReference type="OrthoDB" id="9801447at2"/>
<dbReference type="Proteomes" id="UP000001981">
    <property type="component" value="Chromosome"/>
</dbReference>
<dbReference type="GO" id="GO:0005829">
    <property type="term" value="C:cytosol"/>
    <property type="evidence" value="ECO:0007669"/>
    <property type="project" value="TreeGrafter"/>
</dbReference>
<dbReference type="GO" id="GO:0000166">
    <property type="term" value="F:nucleotide binding"/>
    <property type="evidence" value="ECO:0007669"/>
    <property type="project" value="TreeGrafter"/>
</dbReference>
<dbReference type="CDD" id="cd11740">
    <property type="entry name" value="YajQ_like"/>
    <property type="match status" value="1"/>
</dbReference>
<dbReference type="FunFam" id="3.30.70.860:FF:000001">
    <property type="entry name" value="UPF0234 protein YajQ"/>
    <property type="match status" value="1"/>
</dbReference>
<dbReference type="Gene3D" id="3.30.70.860">
    <property type="match status" value="1"/>
</dbReference>
<dbReference type="Gene3D" id="3.30.70.990">
    <property type="entry name" value="YajQ-like, domain 2"/>
    <property type="match status" value="1"/>
</dbReference>
<dbReference type="HAMAP" id="MF_00632">
    <property type="entry name" value="YajQ"/>
    <property type="match status" value="1"/>
</dbReference>
<dbReference type="InterPro" id="IPR007551">
    <property type="entry name" value="DUF520"/>
</dbReference>
<dbReference type="InterPro" id="IPR035571">
    <property type="entry name" value="UPF0234-like_C"/>
</dbReference>
<dbReference type="InterPro" id="IPR035570">
    <property type="entry name" value="UPF0234_N"/>
</dbReference>
<dbReference type="InterPro" id="IPR036183">
    <property type="entry name" value="YajQ-like_sf"/>
</dbReference>
<dbReference type="NCBIfam" id="NF003819">
    <property type="entry name" value="PRK05412.1"/>
    <property type="match status" value="1"/>
</dbReference>
<dbReference type="PANTHER" id="PTHR30476">
    <property type="entry name" value="UPF0234 PROTEIN YAJQ"/>
    <property type="match status" value="1"/>
</dbReference>
<dbReference type="PANTHER" id="PTHR30476:SF0">
    <property type="entry name" value="UPF0234 PROTEIN YAJQ"/>
    <property type="match status" value="1"/>
</dbReference>
<dbReference type="Pfam" id="PF04461">
    <property type="entry name" value="DUF520"/>
    <property type="match status" value="1"/>
</dbReference>
<dbReference type="SUPFAM" id="SSF89963">
    <property type="entry name" value="YajQ-like"/>
    <property type="match status" value="2"/>
</dbReference>
<evidence type="ECO:0000255" key="1">
    <source>
        <dbReference type="HAMAP-Rule" id="MF_00632"/>
    </source>
</evidence>
<feature type="chain" id="PRO_0000261959" description="Nucleotide-binding protein Patl_4311">
    <location>
        <begin position="1"/>
        <end position="160"/>
    </location>
</feature>